<sequence length="795" mass="87432">MKFSELWLREWVNPAIDSDALANQITMAGLEVDGVEPVAGSFHGVVVGEVVECAQHPNADKLRVTKVNVGGDRLLDIVCGAPNCRQGLRVAVATIGAVLPGDFKIKAAKLRGEPSEGMLCSFSELGISDDHNGIIELPADAPIGTDIREYLKLDDNTIEISVTPNRADCLGIIGVARDVAVLNQLPLVEPEIVPVGATIDDTLPITVEAPEACPRYLGRVVKGINVKAPTPLWMKEKLRRCGIRSIDAVVDVTNYVLLELGQPMHAFDKDRIEGGIVVRMAKEGETLVLLDGTEAKLNADTLVIADHNKALAMGGIFGGEHSGVNDETQNVLLECAFFSPLSITGRARRHGLHTDASHRYERGVDPALQYKAMERATRLLIDICGGEAGPVIDITNEATLPKRATITLRRSKLDRLIGHHIADEQVTDILRRLGCEVTEGKDEWQAVAPSWRFDMEIEEDLVEEVARVYGYNNIPDEPVQASLIMGTHREADLSLKRVKTLLNDKGYQEVITYSFVDPKVQQMIHPGVEALLLPSPISVEMSAMRLSLWTGLLATVVYNQNRQQNRVRIFESGLRFVPDTQAPLGIRQDLMLAGVICGNRYEEHWNLAKETVDFYDLKGDLESVLDLTGKLNEVEFRAEANPALHPGQSAAIYLKGERIGFVGVVHPELERKLDLNGRTLVFELEWNKLADRVVPQAREISRFPANRRDIAVVVAENVPAADILSECKKVGVNQVVGVNLFDVYRGKGVAEGYKSLAISLILQDTSRTLEEEEIAATVAKCVEALKERFQASLRD</sequence>
<comment type="catalytic activity">
    <reaction evidence="1">
        <text>tRNA(Phe) + L-phenylalanine + ATP = L-phenylalanyl-tRNA(Phe) + AMP + diphosphate + H(+)</text>
        <dbReference type="Rhea" id="RHEA:19413"/>
        <dbReference type="Rhea" id="RHEA-COMP:9668"/>
        <dbReference type="Rhea" id="RHEA-COMP:9699"/>
        <dbReference type="ChEBI" id="CHEBI:15378"/>
        <dbReference type="ChEBI" id="CHEBI:30616"/>
        <dbReference type="ChEBI" id="CHEBI:33019"/>
        <dbReference type="ChEBI" id="CHEBI:58095"/>
        <dbReference type="ChEBI" id="CHEBI:78442"/>
        <dbReference type="ChEBI" id="CHEBI:78531"/>
        <dbReference type="ChEBI" id="CHEBI:456215"/>
        <dbReference type="EC" id="6.1.1.20"/>
    </reaction>
</comment>
<comment type="cofactor">
    <cofactor evidence="1">
        <name>Mg(2+)</name>
        <dbReference type="ChEBI" id="CHEBI:18420"/>
    </cofactor>
    <text evidence="1">Binds 2 magnesium ions per tetramer.</text>
</comment>
<comment type="subunit">
    <text evidence="1">Tetramer of two alpha and two beta subunits.</text>
</comment>
<comment type="subcellular location">
    <subcellularLocation>
        <location evidence="1">Cytoplasm</location>
    </subcellularLocation>
</comment>
<comment type="similarity">
    <text evidence="1">Belongs to the phenylalanyl-tRNA synthetase beta subunit family. Type 1 subfamily.</text>
</comment>
<name>SYFB_ECO57</name>
<keyword id="KW-0030">Aminoacyl-tRNA synthetase</keyword>
<keyword id="KW-0067">ATP-binding</keyword>
<keyword id="KW-0963">Cytoplasm</keyword>
<keyword id="KW-0436">Ligase</keyword>
<keyword id="KW-0460">Magnesium</keyword>
<keyword id="KW-0479">Metal-binding</keyword>
<keyword id="KW-0547">Nucleotide-binding</keyword>
<keyword id="KW-0648">Protein biosynthesis</keyword>
<keyword id="KW-1185">Reference proteome</keyword>
<keyword id="KW-0694">RNA-binding</keyword>
<keyword id="KW-0820">tRNA-binding</keyword>
<feature type="chain" id="PRO_0000126882" description="Phenylalanine--tRNA ligase beta subunit">
    <location>
        <begin position="1"/>
        <end position="795"/>
    </location>
</feature>
<feature type="domain" description="tRNA-binding" evidence="1">
    <location>
        <begin position="39"/>
        <end position="148"/>
    </location>
</feature>
<feature type="domain" description="B5" evidence="1">
    <location>
        <begin position="401"/>
        <end position="476"/>
    </location>
</feature>
<feature type="domain" description="FDX-ACB" evidence="1">
    <location>
        <begin position="701"/>
        <end position="794"/>
    </location>
</feature>
<feature type="binding site" evidence="1">
    <location>
        <position position="454"/>
    </location>
    <ligand>
        <name>Mg(2+)</name>
        <dbReference type="ChEBI" id="CHEBI:18420"/>
        <note>shared with alpha subunit</note>
    </ligand>
</feature>
<feature type="binding site" evidence="1">
    <location>
        <position position="460"/>
    </location>
    <ligand>
        <name>Mg(2+)</name>
        <dbReference type="ChEBI" id="CHEBI:18420"/>
        <note>shared with alpha subunit</note>
    </ligand>
</feature>
<feature type="binding site" evidence="1">
    <location>
        <position position="463"/>
    </location>
    <ligand>
        <name>Mg(2+)</name>
        <dbReference type="ChEBI" id="CHEBI:18420"/>
        <note>shared with alpha subunit</note>
    </ligand>
</feature>
<feature type="binding site" evidence="1">
    <location>
        <position position="464"/>
    </location>
    <ligand>
        <name>Mg(2+)</name>
        <dbReference type="ChEBI" id="CHEBI:18420"/>
        <note>shared with alpha subunit</note>
    </ligand>
</feature>
<proteinExistence type="inferred from homology"/>
<gene>
    <name evidence="1" type="primary">pheT</name>
    <name type="ordered locus">Z2742</name>
    <name type="ordered locus">ECs2420</name>
</gene>
<protein>
    <recommendedName>
        <fullName evidence="1">Phenylalanine--tRNA ligase beta subunit</fullName>
        <ecNumber evidence="1">6.1.1.20</ecNumber>
    </recommendedName>
    <alternativeName>
        <fullName evidence="1">Phenylalanyl-tRNA synthetase beta subunit</fullName>
        <shortName evidence="1">PheRS</shortName>
    </alternativeName>
</protein>
<organism>
    <name type="scientific">Escherichia coli O157:H7</name>
    <dbReference type="NCBI Taxonomy" id="83334"/>
    <lineage>
        <taxon>Bacteria</taxon>
        <taxon>Pseudomonadati</taxon>
        <taxon>Pseudomonadota</taxon>
        <taxon>Gammaproteobacteria</taxon>
        <taxon>Enterobacterales</taxon>
        <taxon>Enterobacteriaceae</taxon>
        <taxon>Escherichia</taxon>
    </lineage>
</organism>
<evidence type="ECO:0000255" key="1">
    <source>
        <dbReference type="HAMAP-Rule" id="MF_00283"/>
    </source>
</evidence>
<reference key="1">
    <citation type="journal article" date="2001" name="Nature">
        <title>Genome sequence of enterohaemorrhagic Escherichia coli O157:H7.</title>
        <authorList>
            <person name="Perna N.T."/>
            <person name="Plunkett G. III"/>
            <person name="Burland V."/>
            <person name="Mau B."/>
            <person name="Glasner J.D."/>
            <person name="Rose D.J."/>
            <person name="Mayhew G.F."/>
            <person name="Evans P.S."/>
            <person name="Gregor J."/>
            <person name="Kirkpatrick H.A."/>
            <person name="Posfai G."/>
            <person name="Hackett J."/>
            <person name="Klink S."/>
            <person name="Boutin A."/>
            <person name="Shao Y."/>
            <person name="Miller L."/>
            <person name="Grotbeck E.J."/>
            <person name="Davis N.W."/>
            <person name="Lim A."/>
            <person name="Dimalanta E.T."/>
            <person name="Potamousis K."/>
            <person name="Apodaca J."/>
            <person name="Anantharaman T.S."/>
            <person name="Lin J."/>
            <person name="Yen G."/>
            <person name="Schwartz D.C."/>
            <person name="Welch R.A."/>
            <person name="Blattner F.R."/>
        </authorList>
    </citation>
    <scope>NUCLEOTIDE SEQUENCE [LARGE SCALE GENOMIC DNA]</scope>
    <source>
        <strain>O157:H7 / EDL933 / ATCC 700927 / EHEC</strain>
    </source>
</reference>
<reference key="2">
    <citation type="journal article" date="2001" name="DNA Res.">
        <title>Complete genome sequence of enterohemorrhagic Escherichia coli O157:H7 and genomic comparison with a laboratory strain K-12.</title>
        <authorList>
            <person name="Hayashi T."/>
            <person name="Makino K."/>
            <person name="Ohnishi M."/>
            <person name="Kurokawa K."/>
            <person name="Ishii K."/>
            <person name="Yokoyama K."/>
            <person name="Han C.-G."/>
            <person name="Ohtsubo E."/>
            <person name="Nakayama K."/>
            <person name="Murata T."/>
            <person name="Tanaka M."/>
            <person name="Tobe T."/>
            <person name="Iida T."/>
            <person name="Takami H."/>
            <person name="Honda T."/>
            <person name="Sasakawa C."/>
            <person name="Ogasawara N."/>
            <person name="Yasunaga T."/>
            <person name="Kuhara S."/>
            <person name="Shiba T."/>
            <person name="Hattori M."/>
            <person name="Shinagawa H."/>
        </authorList>
    </citation>
    <scope>NUCLEOTIDE SEQUENCE [LARGE SCALE GENOMIC DNA]</scope>
    <source>
        <strain>O157:H7 / Sakai / RIMD 0509952 / EHEC</strain>
    </source>
</reference>
<accession>Q8XE32</accession>
<dbReference type="EC" id="6.1.1.20" evidence="1"/>
<dbReference type="EMBL" id="AE005174">
    <property type="protein sequence ID" value="AAG56700.1"/>
    <property type="molecule type" value="Genomic_DNA"/>
</dbReference>
<dbReference type="EMBL" id="BA000007">
    <property type="protein sequence ID" value="BAB35843.1"/>
    <property type="molecule type" value="Genomic_DNA"/>
</dbReference>
<dbReference type="PIR" id="D90931">
    <property type="entry name" value="D90931"/>
</dbReference>
<dbReference type="PIR" id="H85779">
    <property type="entry name" value="H85779"/>
</dbReference>
<dbReference type="RefSeq" id="NP_310447.1">
    <property type="nucleotide sequence ID" value="NC_002695.1"/>
</dbReference>
<dbReference type="RefSeq" id="WP_000672328.1">
    <property type="nucleotide sequence ID" value="NZ_VOAI01000007.1"/>
</dbReference>
<dbReference type="SMR" id="Q8XE32"/>
<dbReference type="STRING" id="155864.Z2742"/>
<dbReference type="GeneID" id="912837"/>
<dbReference type="KEGG" id="ece:Z2742"/>
<dbReference type="KEGG" id="ecs:ECs_2420"/>
<dbReference type="PATRIC" id="fig|386585.9.peg.2534"/>
<dbReference type="eggNOG" id="COG0072">
    <property type="taxonomic scope" value="Bacteria"/>
</dbReference>
<dbReference type="eggNOG" id="COG0073">
    <property type="taxonomic scope" value="Bacteria"/>
</dbReference>
<dbReference type="HOGENOM" id="CLU_016891_0_0_6"/>
<dbReference type="OMA" id="PSPLWMQ"/>
<dbReference type="Proteomes" id="UP000000558">
    <property type="component" value="Chromosome"/>
</dbReference>
<dbReference type="Proteomes" id="UP000002519">
    <property type="component" value="Chromosome"/>
</dbReference>
<dbReference type="GO" id="GO:0009328">
    <property type="term" value="C:phenylalanine-tRNA ligase complex"/>
    <property type="evidence" value="ECO:0007669"/>
    <property type="project" value="TreeGrafter"/>
</dbReference>
<dbReference type="GO" id="GO:0005524">
    <property type="term" value="F:ATP binding"/>
    <property type="evidence" value="ECO:0007669"/>
    <property type="project" value="UniProtKB-UniRule"/>
</dbReference>
<dbReference type="GO" id="GO:0000287">
    <property type="term" value="F:magnesium ion binding"/>
    <property type="evidence" value="ECO:0007669"/>
    <property type="project" value="UniProtKB-UniRule"/>
</dbReference>
<dbReference type="GO" id="GO:0004826">
    <property type="term" value="F:phenylalanine-tRNA ligase activity"/>
    <property type="evidence" value="ECO:0007669"/>
    <property type="project" value="UniProtKB-UniRule"/>
</dbReference>
<dbReference type="GO" id="GO:0000049">
    <property type="term" value="F:tRNA binding"/>
    <property type="evidence" value="ECO:0007669"/>
    <property type="project" value="UniProtKB-KW"/>
</dbReference>
<dbReference type="GO" id="GO:0006432">
    <property type="term" value="P:phenylalanyl-tRNA aminoacylation"/>
    <property type="evidence" value="ECO:0007669"/>
    <property type="project" value="UniProtKB-UniRule"/>
</dbReference>
<dbReference type="CDD" id="cd00769">
    <property type="entry name" value="PheRS_beta_core"/>
    <property type="match status" value="1"/>
</dbReference>
<dbReference type="CDD" id="cd02796">
    <property type="entry name" value="tRNA_bind_bactPheRS"/>
    <property type="match status" value="1"/>
</dbReference>
<dbReference type="FunFam" id="2.40.50.140:FF:000045">
    <property type="entry name" value="Phenylalanine--tRNA ligase beta subunit"/>
    <property type="match status" value="1"/>
</dbReference>
<dbReference type="FunFam" id="3.30.56.10:FF:000002">
    <property type="entry name" value="Phenylalanine--tRNA ligase beta subunit"/>
    <property type="match status" value="1"/>
</dbReference>
<dbReference type="FunFam" id="3.30.70.380:FF:000001">
    <property type="entry name" value="Phenylalanine--tRNA ligase beta subunit"/>
    <property type="match status" value="1"/>
</dbReference>
<dbReference type="FunFam" id="3.30.930.10:FF:000022">
    <property type="entry name" value="Phenylalanine--tRNA ligase beta subunit"/>
    <property type="match status" value="1"/>
</dbReference>
<dbReference type="FunFam" id="3.50.40.10:FF:000001">
    <property type="entry name" value="Phenylalanine--tRNA ligase beta subunit"/>
    <property type="match status" value="1"/>
</dbReference>
<dbReference type="Gene3D" id="3.30.56.10">
    <property type="match status" value="2"/>
</dbReference>
<dbReference type="Gene3D" id="3.30.930.10">
    <property type="entry name" value="Bira Bifunctional Protein, Domain 2"/>
    <property type="match status" value="1"/>
</dbReference>
<dbReference type="Gene3D" id="3.30.70.380">
    <property type="entry name" value="Ferrodoxin-fold anticodon-binding domain"/>
    <property type="match status" value="1"/>
</dbReference>
<dbReference type="Gene3D" id="2.40.50.140">
    <property type="entry name" value="Nucleic acid-binding proteins"/>
    <property type="match status" value="1"/>
</dbReference>
<dbReference type="Gene3D" id="3.50.40.10">
    <property type="entry name" value="Phenylalanyl-trna Synthetase, Chain B, domain 3"/>
    <property type="match status" value="1"/>
</dbReference>
<dbReference type="HAMAP" id="MF_00283">
    <property type="entry name" value="Phe_tRNA_synth_beta1"/>
    <property type="match status" value="1"/>
</dbReference>
<dbReference type="InterPro" id="IPR045864">
    <property type="entry name" value="aa-tRNA-synth_II/BPL/LPL"/>
</dbReference>
<dbReference type="InterPro" id="IPR005146">
    <property type="entry name" value="B3/B4_tRNA-bd"/>
</dbReference>
<dbReference type="InterPro" id="IPR009061">
    <property type="entry name" value="DNA-bd_dom_put_sf"/>
</dbReference>
<dbReference type="InterPro" id="IPR005121">
    <property type="entry name" value="Fdx_antiC-bd"/>
</dbReference>
<dbReference type="InterPro" id="IPR036690">
    <property type="entry name" value="Fdx_antiC-bd_sf"/>
</dbReference>
<dbReference type="InterPro" id="IPR012340">
    <property type="entry name" value="NA-bd_OB-fold"/>
</dbReference>
<dbReference type="InterPro" id="IPR045060">
    <property type="entry name" value="Phe-tRNA-ligase_IIc_bsu"/>
</dbReference>
<dbReference type="InterPro" id="IPR004532">
    <property type="entry name" value="Phe-tRNA-ligase_IIc_bsu_bact"/>
</dbReference>
<dbReference type="InterPro" id="IPR020825">
    <property type="entry name" value="Phe-tRNA_synthase-like_B3/B4"/>
</dbReference>
<dbReference type="InterPro" id="IPR041616">
    <property type="entry name" value="PheRS_beta_core"/>
</dbReference>
<dbReference type="InterPro" id="IPR002547">
    <property type="entry name" value="tRNA-bd_dom"/>
</dbReference>
<dbReference type="InterPro" id="IPR033714">
    <property type="entry name" value="tRNA_bind_bactPheRS"/>
</dbReference>
<dbReference type="InterPro" id="IPR005147">
    <property type="entry name" value="tRNA_synthase_B5-dom"/>
</dbReference>
<dbReference type="NCBIfam" id="TIGR00472">
    <property type="entry name" value="pheT_bact"/>
    <property type="match status" value="1"/>
</dbReference>
<dbReference type="NCBIfam" id="NF045760">
    <property type="entry name" value="YtpR"/>
    <property type="match status" value="1"/>
</dbReference>
<dbReference type="PANTHER" id="PTHR10947:SF0">
    <property type="entry name" value="PHENYLALANINE--TRNA LIGASE BETA SUBUNIT"/>
    <property type="match status" value="1"/>
</dbReference>
<dbReference type="PANTHER" id="PTHR10947">
    <property type="entry name" value="PHENYLALANYL-TRNA SYNTHETASE BETA CHAIN AND LEUCINE-RICH REPEAT-CONTAINING PROTEIN 47"/>
    <property type="match status" value="1"/>
</dbReference>
<dbReference type="Pfam" id="PF03483">
    <property type="entry name" value="B3_4"/>
    <property type="match status" value="1"/>
</dbReference>
<dbReference type="Pfam" id="PF03484">
    <property type="entry name" value="B5"/>
    <property type="match status" value="1"/>
</dbReference>
<dbReference type="Pfam" id="PF03147">
    <property type="entry name" value="FDX-ACB"/>
    <property type="match status" value="1"/>
</dbReference>
<dbReference type="Pfam" id="PF01588">
    <property type="entry name" value="tRNA_bind"/>
    <property type="match status" value="1"/>
</dbReference>
<dbReference type="Pfam" id="PF17759">
    <property type="entry name" value="tRNA_synthFbeta"/>
    <property type="match status" value="1"/>
</dbReference>
<dbReference type="SMART" id="SM00873">
    <property type="entry name" value="B3_4"/>
    <property type="match status" value="1"/>
</dbReference>
<dbReference type="SMART" id="SM00874">
    <property type="entry name" value="B5"/>
    <property type="match status" value="1"/>
</dbReference>
<dbReference type="SMART" id="SM00896">
    <property type="entry name" value="FDX-ACB"/>
    <property type="match status" value="1"/>
</dbReference>
<dbReference type="SUPFAM" id="SSF54991">
    <property type="entry name" value="Anticodon-binding domain of PheRS"/>
    <property type="match status" value="1"/>
</dbReference>
<dbReference type="SUPFAM" id="SSF55681">
    <property type="entry name" value="Class II aaRS and biotin synthetases"/>
    <property type="match status" value="1"/>
</dbReference>
<dbReference type="SUPFAM" id="SSF50249">
    <property type="entry name" value="Nucleic acid-binding proteins"/>
    <property type="match status" value="1"/>
</dbReference>
<dbReference type="SUPFAM" id="SSF56037">
    <property type="entry name" value="PheT/TilS domain"/>
    <property type="match status" value="1"/>
</dbReference>
<dbReference type="SUPFAM" id="SSF46955">
    <property type="entry name" value="Putative DNA-binding domain"/>
    <property type="match status" value="1"/>
</dbReference>
<dbReference type="PROSITE" id="PS51483">
    <property type="entry name" value="B5"/>
    <property type="match status" value="1"/>
</dbReference>
<dbReference type="PROSITE" id="PS51447">
    <property type="entry name" value="FDX_ACB"/>
    <property type="match status" value="1"/>
</dbReference>
<dbReference type="PROSITE" id="PS50886">
    <property type="entry name" value="TRBD"/>
    <property type="match status" value="1"/>
</dbReference>